<keyword id="KW-0053">Apoptosis</keyword>
<keyword id="KW-0131">Cell cycle</keyword>
<keyword id="KW-1003">Cell membrane</keyword>
<keyword id="KW-0966">Cell projection</keyword>
<keyword id="KW-0963">Cytoplasm</keyword>
<keyword id="KW-0968">Cytoplasmic vesicle</keyword>
<keyword id="KW-0206">Cytoskeleton</keyword>
<keyword id="KW-0217">Developmental protein</keyword>
<keyword id="KW-0221">Differentiation</keyword>
<keyword id="KW-1015">Disulfide bond</keyword>
<keyword id="KW-0256">Endoplasmic reticulum</keyword>
<keyword id="KW-0967">Endosome</keyword>
<keyword id="KW-0297">G-protein coupled receptor</keyword>
<keyword id="KW-0333">Golgi apparatus</keyword>
<keyword id="KW-0472">Membrane</keyword>
<keyword id="KW-0496">Mitochondrion</keyword>
<keyword id="KW-0524">Neurogenesis</keyword>
<keyword id="KW-0539">Nucleus</keyword>
<keyword id="KW-0628">Postsynaptic cell membrane</keyword>
<keyword id="KW-0675">Receptor</keyword>
<keyword id="KW-1185">Reference proteome</keyword>
<keyword id="KW-0770">Synapse</keyword>
<keyword id="KW-0807">Transducer</keyword>
<keyword id="KW-0812">Transmembrane</keyword>
<keyword id="KW-1133">Transmembrane helix</keyword>
<proteinExistence type="evidence at protein level"/>
<accession>B3G515</accession>
<organism>
    <name type="scientific">Danio rerio</name>
    <name type="common">Zebrafish</name>
    <name type="synonym">Brachydanio rerio</name>
    <dbReference type="NCBI Taxonomy" id="7955"/>
    <lineage>
        <taxon>Eukaryota</taxon>
        <taxon>Metazoa</taxon>
        <taxon>Chordata</taxon>
        <taxon>Craniata</taxon>
        <taxon>Vertebrata</taxon>
        <taxon>Euteleostomi</taxon>
        <taxon>Actinopterygii</taxon>
        <taxon>Neopterygii</taxon>
        <taxon>Teleostei</taxon>
        <taxon>Ostariophysi</taxon>
        <taxon>Cypriniformes</taxon>
        <taxon>Danionidae</taxon>
        <taxon>Danioninae</taxon>
        <taxon>Danio</taxon>
    </lineage>
</organism>
<feature type="chain" id="PRO_0000424544" description="G-protein coupled estrogen receptor 1">
    <location>
        <begin position="1"/>
        <end position="353"/>
    </location>
</feature>
<feature type="topological domain" description="Extracellular" evidence="2">
    <location>
        <begin position="1"/>
        <end position="40"/>
    </location>
</feature>
<feature type="transmembrane region" description="Helical; Name=1" evidence="2">
    <location>
        <begin position="41"/>
        <end position="61"/>
    </location>
</feature>
<feature type="topological domain" description="Cytoplasmic" evidence="2">
    <location>
        <begin position="62"/>
        <end position="81"/>
    </location>
</feature>
<feature type="transmembrane region" description="Helical; Name=2" evidence="2">
    <location>
        <begin position="82"/>
        <end position="102"/>
    </location>
</feature>
<feature type="topological domain" description="Extracellular" evidence="2">
    <location>
        <begin position="103"/>
        <end position="112"/>
    </location>
</feature>
<feature type="transmembrane region" description="Helical; Name=3" evidence="2">
    <location>
        <begin position="113"/>
        <end position="133"/>
    </location>
</feature>
<feature type="topological domain" description="Cytoplasmic" evidence="2">
    <location>
        <begin position="134"/>
        <end position="160"/>
    </location>
</feature>
<feature type="transmembrane region" description="Helical; Name=4" evidence="2">
    <location>
        <begin position="161"/>
        <end position="181"/>
    </location>
</feature>
<feature type="topological domain" description="Extracellular" evidence="2">
    <location>
        <begin position="182"/>
        <end position="202"/>
    </location>
</feature>
<feature type="transmembrane region" description="Helical; Name=5" evidence="2">
    <location>
        <begin position="203"/>
        <end position="223"/>
    </location>
</feature>
<feature type="topological domain" description="Cytoplasmic" evidence="2">
    <location>
        <begin position="224"/>
        <end position="245"/>
    </location>
</feature>
<feature type="transmembrane region" description="Helical; Name=6" evidence="2">
    <location>
        <begin position="246"/>
        <end position="266"/>
    </location>
</feature>
<feature type="topological domain" description="Extracellular" evidence="2">
    <location>
        <begin position="267"/>
        <end position="292"/>
    </location>
</feature>
<feature type="transmembrane region" description="Helical; Name=7" evidence="2">
    <location>
        <begin position="293"/>
        <end position="313"/>
    </location>
</feature>
<feature type="topological domain" description="Cytoplasmic" evidence="2">
    <location>
        <begin position="314"/>
        <end position="353"/>
    </location>
</feature>
<feature type="disulfide bond" evidence="3">
    <location>
        <begin position="115"/>
        <end position="192"/>
    </location>
</feature>
<protein>
    <recommendedName>
        <fullName>G-protein coupled estrogen receptor 1</fullName>
    </recommendedName>
    <alternativeName>
        <fullName>G protein-coupled estrogen receptor 1</fullName>
    </alternativeName>
    <alternativeName>
        <fullName>G-protein coupled receptor 30</fullName>
    </alternativeName>
</protein>
<sequence>MEEQTTNVIQIYVNGTEQFNASFDFNITDVKESTDTYEFYIIGLFLSCLYTIFLFPIGFIGNILILVVNLNHRERMTIPDLYFVNLAVADLILVADSLIEVFNLNEKYYDYAVLCTFMSLFLQVNMYSSIFFLTWMSFDRYVALTSSMSSSPLRTMQHAKLSCSLIWMASILATLLPFTIVQTQHTGEVHFCFANVFEIQWLEVTIGFLIPFSIIGLCYSLIVRTLMRAQKHKGLWPRRQKALRMIVVVVLVFFICWLPENVFISIQLLQGTADPSKRTDTTLWHDYPLTGHIVNLAAFSNSCLNPIIYSFLGETFRDKLRLFIKRKASWSVVYRFCNHTLDLQIPVRSESEV</sequence>
<name>GPER1_DANRE</name>
<gene>
    <name type="primary">gper1</name>
</gene>
<comment type="function">
    <text evidence="4 5 6">Membrane G-protein coupled estrogen receptor that binds to 17-beta-estradiol (E2) with high affinity, leading to rapid and transient activation of numerous intracellular signaling pathways. Plays a role in the embryonic development of sensory and motor neurons. Specifically induces apoptosis and reduces proliferation of brain cells. Involved in maintenance of meiotic arrest in oocytes.</text>
</comment>
<comment type="biophysicochemical properties">
    <kinetics>
        <text evidence="5">Binds 17-beta-estradiol (E2) in plasma membranes with high affinity and displays rapid kinetics of association and dissociation.</text>
    </kinetics>
</comment>
<comment type="subunit">
    <text evidence="1">Homodimer. Heterodimer (By similarity).</text>
</comment>
<comment type="subcellular location">
    <subcellularLocation>
        <location evidence="1">Nucleus</location>
    </subcellularLocation>
    <subcellularLocation>
        <location evidence="1">Cytoplasm</location>
        <location evidence="1">Perinuclear region</location>
    </subcellularLocation>
    <subcellularLocation>
        <location evidence="1">Cytoplasm</location>
    </subcellularLocation>
    <subcellularLocation>
        <location evidence="1">Cytoplasm</location>
        <location evidence="1">Cytoskeleton</location>
    </subcellularLocation>
    <subcellularLocation>
        <location evidence="1">Cytoplasmic vesicle membrane</location>
        <topology evidence="1">Multi-pass membrane protein</topology>
    </subcellularLocation>
    <subcellularLocation>
        <location evidence="5">Cell membrane</location>
        <topology evidence="5">Multi-pass membrane protein</topology>
    </subcellularLocation>
    <subcellularLocation>
        <location evidence="1">Basolateral cell membrane</location>
        <topology evidence="1">Multi-pass membrane protein</topology>
    </subcellularLocation>
    <subcellularLocation>
        <location evidence="1">Endoplasmic reticulum membrane</location>
        <topology evidence="1">Multi-pass membrane protein</topology>
    </subcellularLocation>
    <subcellularLocation>
        <location evidence="1">Early endosome</location>
    </subcellularLocation>
    <subcellularLocation>
        <location evidence="1">Recycling endosome</location>
    </subcellularLocation>
    <subcellularLocation>
        <location evidence="1">Golgi apparatus</location>
        <location evidence="1">trans-Golgi network</location>
    </subcellularLocation>
    <subcellularLocation>
        <location evidence="1">Golgi apparatus membrane</location>
        <topology evidence="1">Multi-pass membrane protein</topology>
    </subcellularLocation>
    <subcellularLocation>
        <location evidence="1">Cell projection</location>
        <location evidence="1">Dendrite</location>
    </subcellularLocation>
    <subcellularLocation>
        <location evidence="1">Cell projection</location>
        <location evidence="1">Dendritic spine membrane</location>
        <topology evidence="1">Multi-pass membrane protein</topology>
    </subcellularLocation>
    <subcellularLocation>
        <location evidence="1">Cell projection</location>
        <location evidence="1">Axon</location>
    </subcellularLocation>
    <subcellularLocation>
        <location evidence="1">Postsynaptic density</location>
    </subcellularLocation>
    <subcellularLocation>
        <location evidence="1">Mitochondrion membrane</location>
        <topology evidence="1">Multi-pass membrane protein</topology>
    </subcellularLocation>
    <text evidence="1">Colocalized with cadherin at the plasma membrane.</text>
</comment>
<comment type="tissue specificity">
    <text evidence="5">Expressed in brain regions that are known to control reproduction and sex behavior. Expressed in ovary, muscle and intestine. Expressed in early germ cells of the testis, including the spermatogonia, spermatocytes, and somatic cells such as Sertoli cells.</text>
</comment>
<comment type="developmental stage">
    <text evidence="6">Expressed throughout early embryonic development from 0 hours post-fertilization (hpf) to 72 hpf. Expressed in blastomeres at 4 hpf. Expressed in the central nervous system at 18 hpf. Expressed in head including the anterior diencephalon, midbrain and hindbrain at 24 hpf. Expressed in trigeminal ganglia as well as in the heart, pancreas and intestinal bulb between 36 and 72 hpf (at protein level).</text>
</comment>
<comment type="disruption phenotype">
    <text evidence="6">Morpholino knockdown of the protein leads to growth retardation and developmental deformity.</text>
</comment>
<comment type="similarity">
    <text evidence="3">Belongs to the G-protein coupled receptor 1 family.</text>
</comment>
<dbReference type="EMBL" id="EU652771">
    <property type="protein sequence ID" value="ACD88749.1"/>
    <property type="molecule type" value="mRNA"/>
</dbReference>
<dbReference type="EMBL" id="CR382361">
    <property type="status" value="NOT_ANNOTATED_CDS"/>
    <property type="molecule type" value="Genomic_DNA"/>
</dbReference>
<dbReference type="RefSeq" id="NP_001122195.1">
    <property type="nucleotide sequence ID" value="NM_001128723.1"/>
</dbReference>
<dbReference type="RefSeq" id="XP_009298009.1">
    <property type="nucleotide sequence ID" value="XM_009299734.3"/>
</dbReference>
<dbReference type="SMR" id="B3G515"/>
<dbReference type="FunCoup" id="B3G515">
    <property type="interactions" value="1737"/>
</dbReference>
<dbReference type="STRING" id="7955.ENSDARP00000156576"/>
<dbReference type="PaxDb" id="7955-ENSDARP00000070486"/>
<dbReference type="Ensembl" id="ENSDART00000076007">
    <property type="protein sequence ID" value="ENSDARP00000070486"/>
    <property type="gene ID" value="ENSDARG00000074661"/>
</dbReference>
<dbReference type="Ensembl" id="ENSDART00000189772">
    <property type="protein sequence ID" value="ENSDARP00000156576"/>
    <property type="gene ID" value="ENSDARG00000074661"/>
</dbReference>
<dbReference type="GeneID" id="565271"/>
<dbReference type="KEGG" id="dre:565271"/>
<dbReference type="AGR" id="ZFIN:ZDB-GENE-090311-1"/>
<dbReference type="CTD" id="2852"/>
<dbReference type="ZFIN" id="ZDB-GENE-090311-1">
    <property type="gene designation" value="gper1"/>
</dbReference>
<dbReference type="eggNOG" id="ENOG502QU56">
    <property type="taxonomic scope" value="Eukaryota"/>
</dbReference>
<dbReference type="HOGENOM" id="CLU_009579_8_3_1"/>
<dbReference type="InParanoid" id="B3G515"/>
<dbReference type="OMA" id="FRTKQHA"/>
<dbReference type="OrthoDB" id="5957382at2759"/>
<dbReference type="PhylomeDB" id="B3G515"/>
<dbReference type="TreeFam" id="TF333506"/>
<dbReference type="Reactome" id="R-DRE-375276">
    <property type="pathway name" value="Peptide ligand-binding receptors"/>
</dbReference>
<dbReference type="Reactome" id="R-DRE-418594">
    <property type="pathway name" value="G alpha (i) signalling events"/>
</dbReference>
<dbReference type="PRO" id="PR:B3G515"/>
<dbReference type="Proteomes" id="UP000000437">
    <property type="component" value="Chromosome 3"/>
</dbReference>
<dbReference type="Bgee" id="ENSDARG00000074661">
    <property type="expression patterns" value="Expressed in male germ cell and 35 other cell types or tissues"/>
</dbReference>
<dbReference type="GO" id="GO:0030424">
    <property type="term" value="C:axon"/>
    <property type="evidence" value="ECO:0007669"/>
    <property type="project" value="UniProtKB-SubCell"/>
</dbReference>
<dbReference type="GO" id="GO:0016323">
    <property type="term" value="C:basolateral plasma membrane"/>
    <property type="evidence" value="ECO:0007669"/>
    <property type="project" value="UniProtKB-SubCell"/>
</dbReference>
<dbReference type="GO" id="GO:0030659">
    <property type="term" value="C:cytoplasmic vesicle membrane"/>
    <property type="evidence" value="ECO:0007669"/>
    <property type="project" value="UniProtKB-SubCell"/>
</dbReference>
<dbReference type="GO" id="GO:0005856">
    <property type="term" value="C:cytoskeleton"/>
    <property type="evidence" value="ECO:0007669"/>
    <property type="project" value="UniProtKB-SubCell"/>
</dbReference>
<dbReference type="GO" id="GO:0032591">
    <property type="term" value="C:dendritic spine membrane"/>
    <property type="evidence" value="ECO:0007669"/>
    <property type="project" value="UniProtKB-SubCell"/>
</dbReference>
<dbReference type="GO" id="GO:0005769">
    <property type="term" value="C:early endosome"/>
    <property type="evidence" value="ECO:0007669"/>
    <property type="project" value="UniProtKB-SubCell"/>
</dbReference>
<dbReference type="GO" id="GO:0005789">
    <property type="term" value="C:endoplasmic reticulum membrane"/>
    <property type="evidence" value="ECO:0007669"/>
    <property type="project" value="UniProtKB-SubCell"/>
</dbReference>
<dbReference type="GO" id="GO:0000139">
    <property type="term" value="C:Golgi membrane"/>
    <property type="evidence" value="ECO:0007669"/>
    <property type="project" value="UniProtKB-SubCell"/>
</dbReference>
<dbReference type="GO" id="GO:0031966">
    <property type="term" value="C:mitochondrial membrane"/>
    <property type="evidence" value="ECO:0007669"/>
    <property type="project" value="UniProtKB-SubCell"/>
</dbReference>
<dbReference type="GO" id="GO:0005634">
    <property type="term" value="C:nucleus"/>
    <property type="evidence" value="ECO:0007669"/>
    <property type="project" value="UniProtKB-SubCell"/>
</dbReference>
<dbReference type="GO" id="GO:0048471">
    <property type="term" value="C:perinuclear region of cytoplasm"/>
    <property type="evidence" value="ECO:0007669"/>
    <property type="project" value="UniProtKB-SubCell"/>
</dbReference>
<dbReference type="GO" id="GO:0005886">
    <property type="term" value="C:plasma membrane"/>
    <property type="evidence" value="ECO:0000314"/>
    <property type="project" value="ZFIN"/>
</dbReference>
<dbReference type="GO" id="GO:0014069">
    <property type="term" value="C:postsynaptic density"/>
    <property type="evidence" value="ECO:0007669"/>
    <property type="project" value="UniProtKB-SubCell"/>
</dbReference>
<dbReference type="GO" id="GO:0045211">
    <property type="term" value="C:postsynaptic membrane"/>
    <property type="evidence" value="ECO:0007669"/>
    <property type="project" value="UniProtKB-KW"/>
</dbReference>
<dbReference type="GO" id="GO:0055037">
    <property type="term" value="C:recycling endosome"/>
    <property type="evidence" value="ECO:0007669"/>
    <property type="project" value="UniProtKB-SubCell"/>
</dbReference>
<dbReference type="GO" id="GO:0038054">
    <property type="term" value="F:G protein-coupled estrogen receptor activity"/>
    <property type="evidence" value="ECO:0000314"/>
    <property type="project" value="ZFIN"/>
</dbReference>
<dbReference type="GO" id="GO:0005496">
    <property type="term" value="F:steroid binding"/>
    <property type="evidence" value="ECO:0000314"/>
    <property type="project" value="UniProtKB"/>
</dbReference>
<dbReference type="GO" id="GO:1990239">
    <property type="term" value="F:steroid hormone binding"/>
    <property type="evidence" value="ECO:0000250"/>
    <property type="project" value="UniProtKB"/>
</dbReference>
<dbReference type="GO" id="GO:0006915">
    <property type="term" value="P:apoptotic process"/>
    <property type="evidence" value="ECO:0007669"/>
    <property type="project" value="UniProtKB-KW"/>
</dbReference>
<dbReference type="GO" id="GO:0007420">
    <property type="term" value="P:brain development"/>
    <property type="evidence" value="ECO:0000314"/>
    <property type="project" value="UniProtKB"/>
</dbReference>
<dbReference type="GO" id="GO:0030154">
    <property type="term" value="P:cell differentiation"/>
    <property type="evidence" value="ECO:0007669"/>
    <property type="project" value="UniProtKB-KW"/>
</dbReference>
<dbReference type="GO" id="GO:0071392">
    <property type="term" value="P:cellular response to estradiol stimulus"/>
    <property type="evidence" value="ECO:0000314"/>
    <property type="project" value="UniProtKB"/>
</dbReference>
<dbReference type="GO" id="GO:0060047">
    <property type="term" value="P:heart contraction"/>
    <property type="evidence" value="ECO:0000315"/>
    <property type="project" value="ZFIN"/>
</dbReference>
<dbReference type="GO" id="GO:0051447">
    <property type="term" value="P:negative regulation of meiotic cell cycle"/>
    <property type="evidence" value="ECO:0000314"/>
    <property type="project" value="UniProtKB"/>
</dbReference>
<dbReference type="GO" id="GO:0043524">
    <property type="term" value="P:negative regulation of neuron apoptotic process"/>
    <property type="evidence" value="ECO:0000314"/>
    <property type="project" value="UniProtKB"/>
</dbReference>
<dbReference type="GO" id="GO:1900194">
    <property type="term" value="P:negative regulation of oocyte maturation"/>
    <property type="evidence" value="ECO:0000314"/>
    <property type="project" value="UniProtKB"/>
</dbReference>
<dbReference type="GO" id="GO:0040019">
    <property type="term" value="P:positive regulation of embryonic development"/>
    <property type="evidence" value="ECO:0000315"/>
    <property type="project" value="UniProtKB"/>
</dbReference>
<dbReference type="GO" id="GO:2000179">
    <property type="term" value="P:positive regulation of neural precursor cell proliferation"/>
    <property type="evidence" value="ECO:0000314"/>
    <property type="project" value="UniProtKB"/>
</dbReference>
<dbReference type="GO" id="GO:0001934">
    <property type="term" value="P:positive regulation of protein phosphorylation"/>
    <property type="evidence" value="ECO:0000314"/>
    <property type="project" value="UniProtKB"/>
</dbReference>
<dbReference type="GO" id="GO:0045944">
    <property type="term" value="P:positive regulation of transcription by RNA polymerase II"/>
    <property type="evidence" value="ECO:0000314"/>
    <property type="project" value="UniProtKB"/>
</dbReference>
<dbReference type="GO" id="GO:2000354">
    <property type="term" value="P:regulation of ovarian follicle development"/>
    <property type="evidence" value="ECO:0000315"/>
    <property type="project" value="ZFIN"/>
</dbReference>
<dbReference type="GO" id="GO:1903186">
    <property type="term" value="P:regulation of vitellogenesis"/>
    <property type="evidence" value="ECO:0000315"/>
    <property type="project" value="ZFIN"/>
</dbReference>
<dbReference type="CDD" id="cd14989">
    <property type="entry name" value="7tmA_GPER1"/>
    <property type="match status" value="1"/>
</dbReference>
<dbReference type="FunFam" id="1.20.1070.10:FF:000093">
    <property type="entry name" value="G-protein coupled estrogen receptor 1"/>
    <property type="match status" value="1"/>
</dbReference>
<dbReference type="Gene3D" id="1.20.1070.10">
    <property type="entry name" value="Rhodopsin 7-helix transmembrane proteins"/>
    <property type="match status" value="1"/>
</dbReference>
<dbReference type="InterPro" id="IPR000276">
    <property type="entry name" value="GPCR_Rhodpsn"/>
</dbReference>
<dbReference type="InterPro" id="IPR017452">
    <property type="entry name" value="GPCR_Rhodpsn_7TM"/>
</dbReference>
<dbReference type="InterPro" id="IPR047143">
    <property type="entry name" value="GPER1-like"/>
</dbReference>
<dbReference type="PANTHER" id="PTHR24226:SF2">
    <property type="entry name" value="G-PROTEIN COUPLED ESTROGEN RECEPTOR 1"/>
    <property type="match status" value="1"/>
</dbReference>
<dbReference type="PANTHER" id="PTHR24226">
    <property type="entry name" value="G-PROTEIN COUPLED RECEPTOR 182 AND ESTROGEN RECEPTOR 1"/>
    <property type="match status" value="1"/>
</dbReference>
<dbReference type="Pfam" id="PF00001">
    <property type="entry name" value="7tm_1"/>
    <property type="match status" value="1"/>
</dbReference>
<dbReference type="PRINTS" id="PR00237">
    <property type="entry name" value="GPCRRHODOPSN"/>
</dbReference>
<dbReference type="SUPFAM" id="SSF81321">
    <property type="entry name" value="Family A G protein-coupled receptor-like"/>
    <property type="match status" value="1"/>
</dbReference>
<dbReference type="PROSITE" id="PS00237">
    <property type="entry name" value="G_PROTEIN_RECEP_F1_1"/>
    <property type="match status" value="1"/>
</dbReference>
<dbReference type="PROSITE" id="PS50262">
    <property type="entry name" value="G_PROTEIN_RECEP_F1_2"/>
    <property type="match status" value="1"/>
</dbReference>
<reference key="1">
    <citation type="journal article" date="2009" name="Biol. Reprod.">
        <title>Identification of a membrane estrogen receptor in zebrafish with homology to mammalian GPER and its high expression in early germ cells of the testis.</title>
        <authorList>
            <person name="Liu X."/>
            <person name="Zhu P."/>
            <person name="Sham K.W."/>
            <person name="Yuen J.M."/>
            <person name="Xie C."/>
            <person name="Zhang Y."/>
            <person name="Liu Y."/>
            <person name="Li S."/>
            <person name="Huang X."/>
            <person name="Cheng C.H."/>
            <person name="Lin H."/>
        </authorList>
    </citation>
    <scope>NUCLEOTIDE SEQUENCE [MRNA]</scope>
    <scope>FUNCTION</scope>
    <scope>ESTROGEN-BINDING</scope>
    <scope>BIOPHYSICOCHEMICAL PROPERTIES</scope>
    <scope>SUBCELLULAR LOCATION</scope>
    <scope>TISSUE SPECIFICITY</scope>
    <source>
        <tissue>Testis</tissue>
    </source>
</reference>
<reference key="2">
    <citation type="journal article" date="2013" name="Nature">
        <title>The zebrafish reference genome sequence and its relationship to the human genome.</title>
        <authorList>
            <person name="Howe K."/>
            <person name="Clark M.D."/>
            <person name="Torroja C.F."/>
            <person name="Torrance J."/>
            <person name="Berthelot C."/>
            <person name="Muffato M."/>
            <person name="Collins J.E."/>
            <person name="Humphray S."/>
            <person name="McLaren K."/>
            <person name="Matthews L."/>
            <person name="McLaren S."/>
            <person name="Sealy I."/>
            <person name="Caccamo M."/>
            <person name="Churcher C."/>
            <person name="Scott C."/>
            <person name="Barrett J.C."/>
            <person name="Koch R."/>
            <person name="Rauch G.J."/>
            <person name="White S."/>
            <person name="Chow W."/>
            <person name="Kilian B."/>
            <person name="Quintais L.T."/>
            <person name="Guerra-Assuncao J.A."/>
            <person name="Zhou Y."/>
            <person name="Gu Y."/>
            <person name="Yen J."/>
            <person name="Vogel J.H."/>
            <person name="Eyre T."/>
            <person name="Redmond S."/>
            <person name="Banerjee R."/>
            <person name="Chi J."/>
            <person name="Fu B."/>
            <person name="Langley E."/>
            <person name="Maguire S.F."/>
            <person name="Laird G.K."/>
            <person name="Lloyd D."/>
            <person name="Kenyon E."/>
            <person name="Donaldson S."/>
            <person name="Sehra H."/>
            <person name="Almeida-King J."/>
            <person name="Loveland J."/>
            <person name="Trevanion S."/>
            <person name="Jones M."/>
            <person name="Quail M."/>
            <person name="Willey D."/>
            <person name="Hunt A."/>
            <person name="Burton J."/>
            <person name="Sims S."/>
            <person name="McLay K."/>
            <person name="Plumb B."/>
            <person name="Davis J."/>
            <person name="Clee C."/>
            <person name="Oliver K."/>
            <person name="Clark R."/>
            <person name="Riddle C."/>
            <person name="Elliot D."/>
            <person name="Threadgold G."/>
            <person name="Harden G."/>
            <person name="Ware D."/>
            <person name="Begum S."/>
            <person name="Mortimore B."/>
            <person name="Kerry G."/>
            <person name="Heath P."/>
            <person name="Phillimore B."/>
            <person name="Tracey A."/>
            <person name="Corby N."/>
            <person name="Dunn M."/>
            <person name="Johnson C."/>
            <person name="Wood J."/>
            <person name="Clark S."/>
            <person name="Pelan S."/>
            <person name="Griffiths G."/>
            <person name="Smith M."/>
            <person name="Glithero R."/>
            <person name="Howden P."/>
            <person name="Barker N."/>
            <person name="Lloyd C."/>
            <person name="Stevens C."/>
            <person name="Harley J."/>
            <person name="Holt K."/>
            <person name="Panagiotidis G."/>
            <person name="Lovell J."/>
            <person name="Beasley H."/>
            <person name="Henderson C."/>
            <person name="Gordon D."/>
            <person name="Auger K."/>
            <person name="Wright D."/>
            <person name="Collins J."/>
            <person name="Raisen C."/>
            <person name="Dyer L."/>
            <person name="Leung K."/>
            <person name="Robertson L."/>
            <person name="Ambridge K."/>
            <person name="Leongamornlert D."/>
            <person name="McGuire S."/>
            <person name="Gilderthorp R."/>
            <person name="Griffiths C."/>
            <person name="Manthravadi D."/>
            <person name="Nichol S."/>
            <person name="Barker G."/>
            <person name="Whitehead S."/>
            <person name="Kay M."/>
            <person name="Brown J."/>
            <person name="Murnane C."/>
            <person name="Gray E."/>
            <person name="Humphries M."/>
            <person name="Sycamore N."/>
            <person name="Barker D."/>
            <person name="Saunders D."/>
            <person name="Wallis J."/>
            <person name="Babbage A."/>
            <person name="Hammond S."/>
            <person name="Mashreghi-Mohammadi M."/>
            <person name="Barr L."/>
            <person name="Martin S."/>
            <person name="Wray P."/>
            <person name="Ellington A."/>
            <person name="Matthews N."/>
            <person name="Ellwood M."/>
            <person name="Woodmansey R."/>
            <person name="Clark G."/>
            <person name="Cooper J."/>
            <person name="Tromans A."/>
            <person name="Grafham D."/>
            <person name="Skuce C."/>
            <person name="Pandian R."/>
            <person name="Andrews R."/>
            <person name="Harrison E."/>
            <person name="Kimberley A."/>
            <person name="Garnett J."/>
            <person name="Fosker N."/>
            <person name="Hall R."/>
            <person name="Garner P."/>
            <person name="Kelly D."/>
            <person name="Bird C."/>
            <person name="Palmer S."/>
            <person name="Gehring I."/>
            <person name="Berger A."/>
            <person name="Dooley C.M."/>
            <person name="Ersan-Urun Z."/>
            <person name="Eser C."/>
            <person name="Geiger H."/>
            <person name="Geisler M."/>
            <person name="Karotki L."/>
            <person name="Kirn A."/>
            <person name="Konantz J."/>
            <person name="Konantz M."/>
            <person name="Oberlander M."/>
            <person name="Rudolph-Geiger S."/>
            <person name="Teucke M."/>
            <person name="Lanz C."/>
            <person name="Raddatz G."/>
            <person name="Osoegawa K."/>
            <person name="Zhu B."/>
            <person name="Rapp A."/>
            <person name="Widaa S."/>
            <person name="Langford C."/>
            <person name="Yang F."/>
            <person name="Schuster S.C."/>
            <person name="Carter N.P."/>
            <person name="Harrow J."/>
            <person name="Ning Z."/>
            <person name="Herrero J."/>
            <person name="Searle S.M."/>
            <person name="Enright A."/>
            <person name="Geisler R."/>
            <person name="Plasterk R.H."/>
            <person name="Lee C."/>
            <person name="Westerfield M."/>
            <person name="de Jong P.J."/>
            <person name="Zon L.I."/>
            <person name="Postlethwait J.H."/>
            <person name="Nusslein-Volhard C."/>
            <person name="Hubbard T.J."/>
            <person name="Roest Crollius H."/>
            <person name="Rogers J."/>
            <person name="Stemple D.L."/>
        </authorList>
    </citation>
    <scope>NUCLEOTIDE SEQUENCE [LARGE SCALE GENOMIC DNA]</scope>
    <source>
        <strain>Tuebingen</strain>
    </source>
</reference>
<reference key="3">
    <citation type="journal article" date="2008" name="Endocrinology">
        <title>Estrogen signaling characteristics of Atlantic croaker G protein-coupled receptor 30 (GPR30) and evidence it is involved in maintenance of oocyte meiotic arrest.</title>
        <authorList>
            <person name="Pang Y."/>
            <person name="Dong J."/>
            <person name="Thomas P."/>
        </authorList>
    </citation>
    <scope>FUNCTION</scope>
</reference>
<reference key="4">
    <citation type="journal article" date="2013" name="Biochem. Biophys. Res. Commun.">
        <title>G-protein-coupled estrogen receptor 1 is involved in brain development during zebrafish (Danio rerio) embryogenesis.</title>
        <authorList>
            <person name="Shi Y."/>
            <person name="Liu X."/>
            <person name="Zhu P."/>
            <person name="Li J."/>
            <person name="Sham K.W."/>
            <person name="Cheng S.H."/>
            <person name="Li S."/>
            <person name="Zhang Y."/>
            <person name="Cheng C.H."/>
            <person name="Lin H."/>
        </authorList>
    </citation>
    <scope>FUNCTION</scope>
    <scope>DISRUPTION PHENOTYPE</scope>
    <scope>DEVELOPMENTAL STAGE</scope>
</reference>
<evidence type="ECO:0000250" key="1"/>
<evidence type="ECO:0000255" key="2"/>
<evidence type="ECO:0000255" key="3">
    <source>
        <dbReference type="PROSITE-ProRule" id="PRU00521"/>
    </source>
</evidence>
<evidence type="ECO:0000269" key="4">
    <source>
    </source>
</evidence>
<evidence type="ECO:0000269" key="5">
    <source>
    </source>
</evidence>
<evidence type="ECO:0000269" key="6">
    <source>
    </source>
</evidence>